<comment type="function">
    <text evidence="2">Synthesizes glutathione from L-glutamate and L-cysteine via gamma-L-glutamyl-L-cysteine.</text>
</comment>
<comment type="catalytic activity">
    <reaction evidence="2">
        <text>L-cysteine + L-glutamate + ATP = gamma-L-glutamyl-L-cysteine + ADP + phosphate + H(+)</text>
        <dbReference type="Rhea" id="RHEA:13285"/>
        <dbReference type="ChEBI" id="CHEBI:15378"/>
        <dbReference type="ChEBI" id="CHEBI:29985"/>
        <dbReference type="ChEBI" id="CHEBI:30616"/>
        <dbReference type="ChEBI" id="CHEBI:35235"/>
        <dbReference type="ChEBI" id="CHEBI:43474"/>
        <dbReference type="ChEBI" id="CHEBI:58173"/>
        <dbReference type="ChEBI" id="CHEBI:456216"/>
        <dbReference type="EC" id="6.3.2.2"/>
    </reaction>
</comment>
<comment type="catalytic activity">
    <reaction evidence="2">
        <text>gamma-L-glutamyl-L-cysteine + glycine + ATP = glutathione + ADP + phosphate + H(+)</text>
        <dbReference type="Rhea" id="RHEA:13557"/>
        <dbReference type="ChEBI" id="CHEBI:15378"/>
        <dbReference type="ChEBI" id="CHEBI:30616"/>
        <dbReference type="ChEBI" id="CHEBI:43474"/>
        <dbReference type="ChEBI" id="CHEBI:57305"/>
        <dbReference type="ChEBI" id="CHEBI:57925"/>
        <dbReference type="ChEBI" id="CHEBI:58173"/>
        <dbReference type="ChEBI" id="CHEBI:456216"/>
        <dbReference type="EC" id="6.3.2.3"/>
    </reaction>
</comment>
<comment type="cofactor">
    <cofactor evidence="1">
        <name>Mg(2+)</name>
        <dbReference type="ChEBI" id="CHEBI:18420"/>
    </cofactor>
    <cofactor evidence="1">
        <name>Mn(2+)</name>
        <dbReference type="ChEBI" id="CHEBI:29035"/>
    </cofactor>
    <text evidence="1">Binds 2 magnesium or manganese ions per subunit.</text>
</comment>
<comment type="pathway">
    <text evidence="2">Sulfur metabolism; glutathione biosynthesis; glutathione from L-cysteine and L-glutamate: step 1/2.</text>
</comment>
<comment type="pathway">
    <text evidence="2">Sulfur metabolism; glutathione biosynthesis; glutathione from L-cysteine and L-glutamate: step 2/2.</text>
</comment>
<comment type="subunit">
    <text evidence="2">Monomer.</text>
</comment>
<comment type="similarity">
    <text evidence="2">In the N-terminal section; belongs to the glutamate--cysteine ligase type 1 family. Type 2 subfamily.</text>
</comment>
<comment type="sequence caution" evidence="3">
    <conflict type="erroneous initiation">
        <sequence resource="EMBL-CDS" id="AAU38290"/>
    </conflict>
</comment>
<accession>Q65RX0</accession>
<keyword id="KW-0067">ATP-binding</keyword>
<keyword id="KW-0317">Glutathione biosynthesis</keyword>
<keyword id="KW-0436">Ligase</keyword>
<keyword id="KW-0460">Magnesium</keyword>
<keyword id="KW-0464">Manganese</keyword>
<keyword id="KW-0479">Metal-binding</keyword>
<keyword id="KW-0511">Multifunctional enzyme</keyword>
<keyword id="KW-0547">Nucleotide-binding</keyword>
<feature type="chain" id="PRO_0000192556" description="Glutathione biosynthesis bifunctional protein GshAB">
    <location>
        <begin position="1"/>
        <end position="757"/>
    </location>
</feature>
<feature type="domain" description="ATP-grasp" evidence="2">
    <location>
        <begin position="494"/>
        <end position="757"/>
    </location>
</feature>
<feature type="region of interest" description="Glutamate--cysteine ligase">
    <location>
        <begin position="1"/>
        <end position="337"/>
    </location>
</feature>
<feature type="binding site" evidence="2">
    <location>
        <begin position="521"/>
        <end position="580"/>
    </location>
    <ligand>
        <name>ATP</name>
        <dbReference type="ChEBI" id="CHEBI:30616"/>
    </ligand>
</feature>
<feature type="binding site" evidence="2">
    <location>
        <position position="702"/>
    </location>
    <ligand>
        <name>Mg(2+)</name>
        <dbReference type="ChEBI" id="CHEBI:18420"/>
        <label>1</label>
    </ligand>
</feature>
<feature type="binding site" evidence="2">
    <location>
        <position position="702"/>
    </location>
    <ligand>
        <name>Mn(2+)</name>
        <dbReference type="ChEBI" id="CHEBI:29035"/>
        <label>1</label>
    </ligand>
</feature>
<feature type="binding site" evidence="2">
    <location>
        <position position="723"/>
    </location>
    <ligand>
        <name>Mg(2+)</name>
        <dbReference type="ChEBI" id="CHEBI:18420"/>
        <label>1</label>
    </ligand>
</feature>
<feature type="binding site" evidence="2">
    <location>
        <position position="723"/>
    </location>
    <ligand>
        <name>Mg(2+)</name>
        <dbReference type="ChEBI" id="CHEBI:18420"/>
        <label>2</label>
    </ligand>
</feature>
<feature type="binding site" evidence="2">
    <location>
        <position position="723"/>
    </location>
    <ligand>
        <name>Mn(2+)</name>
        <dbReference type="ChEBI" id="CHEBI:29035"/>
        <label>1</label>
    </ligand>
</feature>
<feature type="binding site" evidence="2">
    <location>
        <position position="723"/>
    </location>
    <ligand>
        <name>Mn(2+)</name>
        <dbReference type="ChEBI" id="CHEBI:29035"/>
        <label>2</label>
    </ligand>
</feature>
<feature type="binding site" evidence="2">
    <location>
        <position position="725"/>
    </location>
    <ligand>
        <name>Mg(2+)</name>
        <dbReference type="ChEBI" id="CHEBI:18420"/>
        <label>2</label>
    </ligand>
</feature>
<feature type="binding site" evidence="2">
    <location>
        <position position="725"/>
    </location>
    <ligand>
        <name>Mn(2+)</name>
        <dbReference type="ChEBI" id="CHEBI:29035"/>
        <label>2</label>
    </ligand>
</feature>
<reference key="1">
    <citation type="journal article" date="2004" name="Nat. Biotechnol.">
        <title>The genome sequence of the capnophilic rumen bacterium Mannheimia succiniciproducens.</title>
        <authorList>
            <person name="Hong S.H."/>
            <person name="Kim J.S."/>
            <person name="Lee S.Y."/>
            <person name="In Y.H."/>
            <person name="Choi S.S."/>
            <person name="Rih J.-K."/>
            <person name="Kim C.H."/>
            <person name="Jeong H."/>
            <person name="Hur C.G."/>
            <person name="Kim J.J."/>
        </authorList>
    </citation>
    <scope>NUCLEOTIDE SEQUENCE [LARGE SCALE GENOMIC DNA]</scope>
    <source>
        <strain>KCTC 0769BP / MBEL55E</strain>
    </source>
</reference>
<organism>
    <name type="scientific">Mannheimia succiniciproducens (strain KCTC 0769BP / MBEL55E)</name>
    <dbReference type="NCBI Taxonomy" id="221988"/>
    <lineage>
        <taxon>Bacteria</taxon>
        <taxon>Pseudomonadati</taxon>
        <taxon>Pseudomonadota</taxon>
        <taxon>Gammaproteobacteria</taxon>
        <taxon>Pasteurellales</taxon>
        <taxon>Pasteurellaceae</taxon>
        <taxon>Basfia</taxon>
    </lineage>
</organism>
<evidence type="ECO:0000250" key="1"/>
<evidence type="ECO:0000255" key="2">
    <source>
        <dbReference type="HAMAP-Rule" id="MF_00782"/>
    </source>
</evidence>
<evidence type="ECO:0000305" key="3"/>
<proteinExistence type="inferred from homology"/>
<sequence>MNIQQIVKEKGLGLLFRQGTVGIEKESQRVHADGSIVTSEHPKAFGNRSYHPYIQTDFAESQLELITPPNKKIEDTLRWLSALHEVTLRTIDENEYIFPMSMPAGLPPEQEIRVAQLDNAADVAYREHLVASYGKAKQMVSGIHYNFQLDPKLVETLFNAQTDYKSAVDFQNNLYLKMAKNFLRYQWIPLYLLSATPTVEANYFKDGSPLKPNQYVRSLRSSKYGYVNAPDIIVSFDSIEKYVETLEHWVNSGRLIAEKEFYSNVRLRGAKKAREFLHTGIQYLEFRLFDLNPFEAYGINLKDAKFIHHFILLMIWLEETADQDAVELGRARLGEVAFEDPHSETAYRDEGEQIINQLIDMLKAIGAEQSAVEFAEEKLAQFANPGQTLCARLVDAIEQAGGYQQLGGEIAKRNKVQAFERFYALSAFDNMELSTQALMFDAIQKGLNMEILDENDQFLRLQFGDHFEYVKNGNMTSHDSYISPLIMENKVVTKKVLAKAGFNVPQSLEFTSVEQAVASYPLFEGKAVVIKPKSTNFGLGISIFQQGVHDKADFAKAVEIAFREDKEVMVEDYLVGTEYRFFVLGNETLAVLLRVPANVMGDGVHTVAELVAAKNDHPLRGDGSRTPLKKIALGEIEQLQLKEQGLTVDSVPAKDQLVQLRANSNISTGGDSIDMTDEMHPSYKDLAVGITKAMGAAVCGVDLIIPDLKKPAEPNLSSWGVIEANFNPMMMMHIFPYSGKSRRLTLNVLGMLFPELV</sequence>
<protein>
    <recommendedName>
        <fullName evidence="2">Glutathione biosynthesis bifunctional protein GshAB</fullName>
    </recommendedName>
    <alternativeName>
        <fullName evidence="2">Gamma-GCS-GS</fullName>
        <shortName evidence="2">GCS-GS</shortName>
    </alternativeName>
    <domain>
        <recommendedName>
            <fullName evidence="2">Glutamate--cysteine ligase</fullName>
            <ecNumber evidence="2">6.3.2.2</ecNumber>
        </recommendedName>
        <alternativeName>
            <fullName evidence="2">Gamma-ECS</fullName>
            <shortName evidence="2">GCS</shortName>
        </alternativeName>
        <alternativeName>
            <fullName evidence="2">Gamma-glutamylcysteine synthetase</fullName>
        </alternativeName>
    </domain>
    <domain>
        <recommendedName>
            <fullName evidence="2">Glutathione synthetase</fullName>
            <ecNumber evidence="2">6.3.2.3</ecNumber>
        </recommendedName>
        <alternativeName>
            <fullName evidence="2">GSH synthetase</fullName>
            <shortName evidence="2">GS</shortName>
            <shortName evidence="2">GSH-S</shortName>
            <shortName evidence="2">GSHase</shortName>
        </alternativeName>
        <alternativeName>
            <fullName evidence="2">Glutathione synthase</fullName>
        </alternativeName>
    </domain>
</protein>
<gene>
    <name evidence="2" type="primary">gshAB</name>
    <name evidence="2" type="synonym">gshF</name>
    <name type="ordered locus">MS1683</name>
</gene>
<dbReference type="EC" id="6.3.2.2" evidence="2"/>
<dbReference type="EC" id="6.3.2.3" evidence="2"/>
<dbReference type="EMBL" id="AE016827">
    <property type="protein sequence ID" value="AAU38290.1"/>
    <property type="status" value="ALT_INIT"/>
    <property type="molecule type" value="Genomic_DNA"/>
</dbReference>
<dbReference type="RefSeq" id="WP_041639912.1">
    <property type="nucleotide sequence ID" value="NC_006300.1"/>
</dbReference>
<dbReference type="SMR" id="Q65RX0"/>
<dbReference type="STRING" id="221988.MS1683"/>
<dbReference type="KEGG" id="msu:MS1683"/>
<dbReference type="eggNOG" id="COG1181">
    <property type="taxonomic scope" value="Bacteria"/>
</dbReference>
<dbReference type="eggNOG" id="COG2918">
    <property type="taxonomic scope" value="Bacteria"/>
</dbReference>
<dbReference type="HOGENOM" id="CLU_020728_1_0_6"/>
<dbReference type="OrthoDB" id="9803907at2"/>
<dbReference type="UniPathway" id="UPA00142">
    <property type="reaction ID" value="UER00209"/>
</dbReference>
<dbReference type="UniPathway" id="UPA00142">
    <property type="reaction ID" value="UER00210"/>
</dbReference>
<dbReference type="Proteomes" id="UP000000607">
    <property type="component" value="Chromosome"/>
</dbReference>
<dbReference type="GO" id="GO:0005829">
    <property type="term" value="C:cytosol"/>
    <property type="evidence" value="ECO:0007669"/>
    <property type="project" value="TreeGrafter"/>
</dbReference>
<dbReference type="GO" id="GO:0005524">
    <property type="term" value="F:ATP binding"/>
    <property type="evidence" value="ECO:0007669"/>
    <property type="project" value="UniProtKB-UniRule"/>
</dbReference>
<dbReference type="GO" id="GO:0004357">
    <property type="term" value="F:glutamate-cysteine ligase activity"/>
    <property type="evidence" value="ECO:0007669"/>
    <property type="project" value="UniProtKB-UniRule"/>
</dbReference>
<dbReference type="GO" id="GO:0004363">
    <property type="term" value="F:glutathione synthase activity"/>
    <property type="evidence" value="ECO:0007669"/>
    <property type="project" value="UniProtKB-UniRule"/>
</dbReference>
<dbReference type="GO" id="GO:0046872">
    <property type="term" value="F:metal ion binding"/>
    <property type="evidence" value="ECO:0007669"/>
    <property type="project" value="UniProtKB-KW"/>
</dbReference>
<dbReference type="Gene3D" id="3.30.590.20">
    <property type="match status" value="1"/>
</dbReference>
<dbReference type="Gene3D" id="3.30.1490.20">
    <property type="entry name" value="ATP-grasp fold, A domain"/>
    <property type="match status" value="1"/>
</dbReference>
<dbReference type="Gene3D" id="3.30.470.20">
    <property type="entry name" value="ATP-grasp fold, B domain"/>
    <property type="match status" value="2"/>
</dbReference>
<dbReference type="HAMAP" id="MF_00782">
    <property type="entry name" value="Glut_biosynth"/>
    <property type="match status" value="1"/>
</dbReference>
<dbReference type="InterPro" id="IPR011761">
    <property type="entry name" value="ATP-grasp"/>
</dbReference>
<dbReference type="InterPro" id="IPR013815">
    <property type="entry name" value="ATP_grasp_subdomain_1"/>
</dbReference>
<dbReference type="InterPro" id="IPR014746">
    <property type="entry name" value="Gln_synth/guanido_kin_cat_dom"/>
</dbReference>
<dbReference type="InterPro" id="IPR007370">
    <property type="entry name" value="Glu_cys_ligase"/>
</dbReference>
<dbReference type="InterPro" id="IPR006335">
    <property type="entry name" value="Glut_biosynth"/>
</dbReference>
<dbReference type="InterPro" id="IPR006334">
    <property type="entry name" value="Glut_cys_ligase"/>
</dbReference>
<dbReference type="InterPro" id="IPR040657">
    <property type="entry name" value="GshAB_ATP-grasp"/>
</dbReference>
<dbReference type="NCBIfam" id="TIGR01435">
    <property type="entry name" value="glu_cys_lig_rel"/>
    <property type="match status" value="1"/>
</dbReference>
<dbReference type="NCBIfam" id="NF002688">
    <property type="entry name" value="PRK02471.1"/>
    <property type="match status" value="1"/>
</dbReference>
<dbReference type="PANTHER" id="PTHR38761">
    <property type="entry name" value="GLUTAMATE--CYSTEINE LIGASE"/>
    <property type="match status" value="1"/>
</dbReference>
<dbReference type="PANTHER" id="PTHR38761:SF1">
    <property type="entry name" value="GLUTAMATE--CYSTEINE LIGASE"/>
    <property type="match status" value="1"/>
</dbReference>
<dbReference type="Pfam" id="PF18419">
    <property type="entry name" value="ATP-grasp_6"/>
    <property type="match status" value="1"/>
</dbReference>
<dbReference type="Pfam" id="PF04262">
    <property type="entry name" value="Glu_cys_ligase"/>
    <property type="match status" value="1"/>
</dbReference>
<dbReference type="SUPFAM" id="SSF55931">
    <property type="entry name" value="Glutamine synthetase/guanido kinase"/>
    <property type="match status" value="1"/>
</dbReference>
<dbReference type="SUPFAM" id="SSF56059">
    <property type="entry name" value="Glutathione synthetase ATP-binding domain-like"/>
    <property type="match status" value="1"/>
</dbReference>
<dbReference type="PROSITE" id="PS50975">
    <property type="entry name" value="ATP_GRASP"/>
    <property type="match status" value="1"/>
</dbReference>
<name>GSHAB_MANSM</name>